<comment type="function">
    <text evidence="1">The glycine cleavage system catalyzes the degradation of glycine.</text>
</comment>
<comment type="catalytic activity">
    <reaction evidence="1">
        <text>N(6)-[(R)-S(8)-aminomethyldihydrolipoyl]-L-lysyl-[protein] + (6S)-5,6,7,8-tetrahydrofolate = N(6)-[(R)-dihydrolipoyl]-L-lysyl-[protein] + (6R)-5,10-methylene-5,6,7,8-tetrahydrofolate + NH4(+)</text>
        <dbReference type="Rhea" id="RHEA:16945"/>
        <dbReference type="Rhea" id="RHEA-COMP:10475"/>
        <dbReference type="Rhea" id="RHEA-COMP:10492"/>
        <dbReference type="ChEBI" id="CHEBI:15636"/>
        <dbReference type="ChEBI" id="CHEBI:28938"/>
        <dbReference type="ChEBI" id="CHEBI:57453"/>
        <dbReference type="ChEBI" id="CHEBI:83100"/>
        <dbReference type="ChEBI" id="CHEBI:83143"/>
        <dbReference type="EC" id="2.1.2.10"/>
    </reaction>
</comment>
<comment type="subunit">
    <text evidence="1">The glycine cleavage system is composed of four proteins: P, T, L and H.</text>
</comment>
<comment type="similarity">
    <text evidence="1">Belongs to the GcvT family.</text>
</comment>
<sequence length="364" mass="40217">MAQQTPLYEQHTLCGARMVDFHGWMMPLHYGSQLDEHHAVRTDAGMFDVSHMTIVDLHGSRTREFLRYLLANDVAKLTKTGKALYSGMLNASGGVIDDLIVYYFTEDFFRLVVNSATREKDLSWITQHAEPYAIDITVRDDLSLIAVQGPNAQEKAATLFTDQQRHAVEGMKPFFGVQAGDLFIATTGYTGEAGYEIAMPNEKAADFWRALVEAGVKPCGLGARDTLRLEAGMNLYGQEMDEGISPLAANMGWTIAWEPADRDFIGREALEMQREKGHEQLVGLVMTEKGVLRNELPVRFTDAQGNQQEGIITSGTFSPTLGYSIALARVPAGIGETAIVQIRNREMPVKVTKPVFVRNGKAVA</sequence>
<protein>
    <recommendedName>
        <fullName evidence="1">Aminomethyltransferase</fullName>
        <ecNumber evidence="1">2.1.2.10</ecNumber>
    </recommendedName>
    <alternativeName>
        <fullName evidence="1">Glycine cleavage system T protein</fullName>
    </alternativeName>
</protein>
<accession>B5BFM0</accession>
<proteinExistence type="inferred from homology"/>
<dbReference type="EC" id="2.1.2.10" evidence="1"/>
<dbReference type="EMBL" id="FM200053">
    <property type="protein sequence ID" value="CAR60966.1"/>
    <property type="molecule type" value="Genomic_DNA"/>
</dbReference>
<dbReference type="RefSeq" id="WP_000068738.1">
    <property type="nucleotide sequence ID" value="NC_011147.1"/>
</dbReference>
<dbReference type="SMR" id="B5BFM0"/>
<dbReference type="KEGG" id="sek:SSPA2725"/>
<dbReference type="HOGENOM" id="CLU_007884_10_2_6"/>
<dbReference type="Proteomes" id="UP000001869">
    <property type="component" value="Chromosome"/>
</dbReference>
<dbReference type="GO" id="GO:0005829">
    <property type="term" value="C:cytosol"/>
    <property type="evidence" value="ECO:0007669"/>
    <property type="project" value="TreeGrafter"/>
</dbReference>
<dbReference type="GO" id="GO:0005960">
    <property type="term" value="C:glycine cleavage complex"/>
    <property type="evidence" value="ECO:0007669"/>
    <property type="project" value="InterPro"/>
</dbReference>
<dbReference type="GO" id="GO:0004047">
    <property type="term" value="F:aminomethyltransferase activity"/>
    <property type="evidence" value="ECO:0007669"/>
    <property type="project" value="UniProtKB-UniRule"/>
</dbReference>
<dbReference type="GO" id="GO:0008483">
    <property type="term" value="F:transaminase activity"/>
    <property type="evidence" value="ECO:0007669"/>
    <property type="project" value="UniProtKB-KW"/>
</dbReference>
<dbReference type="GO" id="GO:0019464">
    <property type="term" value="P:glycine decarboxylation via glycine cleavage system"/>
    <property type="evidence" value="ECO:0007669"/>
    <property type="project" value="UniProtKB-UniRule"/>
</dbReference>
<dbReference type="FunFam" id="2.40.30.110:FF:000001">
    <property type="entry name" value="Aminomethyltransferase"/>
    <property type="match status" value="1"/>
</dbReference>
<dbReference type="FunFam" id="3.30.70.1400:FF:000001">
    <property type="entry name" value="Aminomethyltransferase"/>
    <property type="match status" value="1"/>
</dbReference>
<dbReference type="FunFam" id="4.10.1250.10:FF:000001">
    <property type="entry name" value="Aminomethyltransferase"/>
    <property type="match status" value="1"/>
</dbReference>
<dbReference type="Gene3D" id="2.40.30.110">
    <property type="entry name" value="Aminomethyltransferase beta-barrel domains"/>
    <property type="match status" value="1"/>
</dbReference>
<dbReference type="Gene3D" id="3.30.70.1400">
    <property type="entry name" value="Aminomethyltransferase beta-barrel domains"/>
    <property type="match status" value="1"/>
</dbReference>
<dbReference type="Gene3D" id="4.10.1250.10">
    <property type="entry name" value="Aminomethyltransferase fragment"/>
    <property type="match status" value="1"/>
</dbReference>
<dbReference type="Gene3D" id="3.30.1360.120">
    <property type="entry name" value="Probable tRNA modification gtpase trme, domain 1"/>
    <property type="match status" value="1"/>
</dbReference>
<dbReference type="HAMAP" id="MF_00259">
    <property type="entry name" value="GcvT"/>
    <property type="match status" value="1"/>
</dbReference>
<dbReference type="InterPro" id="IPR006223">
    <property type="entry name" value="GCS_T"/>
</dbReference>
<dbReference type="InterPro" id="IPR022903">
    <property type="entry name" value="GCS_T_bac"/>
</dbReference>
<dbReference type="InterPro" id="IPR013977">
    <property type="entry name" value="GCST_C"/>
</dbReference>
<dbReference type="InterPro" id="IPR006222">
    <property type="entry name" value="GCV_T_N"/>
</dbReference>
<dbReference type="InterPro" id="IPR028896">
    <property type="entry name" value="GcvT/YgfZ/DmdA"/>
</dbReference>
<dbReference type="InterPro" id="IPR029043">
    <property type="entry name" value="GcvT/YgfZ_C"/>
</dbReference>
<dbReference type="InterPro" id="IPR027266">
    <property type="entry name" value="TrmE/GcvT_dom1"/>
</dbReference>
<dbReference type="NCBIfam" id="TIGR00528">
    <property type="entry name" value="gcvT"/>
    <property type="match status" value="1"/>
</dbReference>
<dbReference type="NCBIfam" id="NF001567">
    <property type="entry name" value="PRK00389.1"/>
    <property type="match status" value="1"/>
</dbReference>
<dbReference type="PANTHER" id="PTHR43757">
    <property type="entry name" value="AMINOMETHYLTRANSFERASE"/>
    <property type="match status" value="1"/>
</dbReference>
<dbReference type="PANTHER" id="PTHR43757:SF2">
    <property type="entry name" value="AMINOMETHYLTRANSFERASE, MITOCHONDRIAL"/>
    <property type="match status" value="1"/>
</dbReference>
<dbReference type="Pfam" id="PF01571">
    <property type="entry name" value="GCV_T"/>
    <property type="match status" value="1"/>
</dbReference>
<dbReference type="Pfam" id="PF08669">
    <property type="entry name" value="GCV_T_C"/>
    <property type="match status" value="1"/>
</dbReference>
<dbReference type="PIRSF" id="PIRSF006487">
    <property type="entry name" value="GcvT"/>
    <property type="match status" value="1"/>
</dbReference>
<dbReference type="SUPFAM" id="SSF101790">
    <property type="entry name" value="Aminomethyltransferase beta-barrel domain"/>
    <property type="match status" value="1"/>
</dbReference>
<dbReference type="SUPFAM" id="SSF103025">
    <property type="entry name" value="Folate-binding domain"/>
    <property type="match status" value="1"/>
</dbReference>
<name>GCST_SALPK</name>
<evidence type="ECO:0000255" key="1">
    <source>
        <dbReference type="HAMAP-Rule" id="MF_00259"/>
    </source>
</evidence>
<keyword id="KW-0032">Aminotransferase</keyword>
<keyword id="KW-0808">Transferase</keyword>
<gene>
    <name evidence="1" type="primary">gcvT</name>
    <name type="ordered locus">SSPA2725</name>
</gene>
<feature type="chain" id="PRO_1000114115" description="Aminomethyltransferase">
    <location>
        <begin position="1"/>
        <end position="364"/>
    </location>
</feature>
<organism>
    <name type="scientific">Salmonella paratyphi A (strain AKU_12601)</name>
    <dbReference type="NCBI Taxonomy" id="554290"/>
    <lineage>
        <taxon>Bacteria</taxon>
        <taxon>Pseudomonadati</taxon>
        <taxon>Pseudomonadota</taxon>
        <taxon>Gammaproteobacteria</taxon>
        <taxon>Enterobacterales</taxon>
        <taxon>Enterobacteriaceae</taxon>
        <taxon>Salmonella</taxon>
    </lineage>
</organism>
<reference key="1">
    <citation type="journal article" date="2009" name="BMC Genomics">
        <title>Pseudogene accumulation in the evolutionary histories of Salmonella enterica serovars Paratyphi A and Typhi.</title>
        <authorList>
            <person name="Holt K.E."/>
            <person name="Thomson N.R."/>
            <person name="Wain J."/>
            <person name="Langridge G.C."/>
            <person name="Hasan R."/>
            <person name="Bhutta Z.A."/>
            <person name="Quail M.A."/>
            <person name="Norbertczak H."/>
            <person name="Walker D."/>
            <person name="Simmonds M."/>
            <person name="White B."/>
            <person name="Bason N."/>
            <person name="Mungall K."/>
            <person name="Dougan G."/>
            <person name="Parkhill J."/>
        </authorList>
    </citation>
    <scope>NUCLEOTIDE SEQUENCE [LARGE SCALE GENOMIC DNA]</scope>
    <source>
        <strain>AKU_12601</strain>
    </source>
</reference>